<sequence length="313" mass="34486">MDFDERGPCSSNMYLPSCTYYVSGPDFSSLPSFLPQTPSSRPMTYSYSSNLPQVQPVREVTFREYAIEPATKWHPRGNLAHCYSAEELVHRDCLQAPSAAGVPGDVLAKSSANVYHHPTPAVSSNFYSTVGRNGVLPQAFDQFFETAYGTPENLASSDYPGDKSAEKGPPAATATSAAAAAAATGAPATSSSDSGGGGGCRETAAAAEEKERRRRPESSSSPESSSGHTEDKAGGSSGQRTRKKRCPYTKYQIRELEREFFFSVYINKEKRLQLSRMLNLTDRQVKIWFQNRRMKEKKINRDRLQYYSANPLL</sequence>
<keyword id="KW-0217">Developmental protein</keyword>
<keyword id="KW-0238">DNA-binding</keyword>
<keyword id="KW-0371">Homeobox</keyword>
<keyword id="KW-0539">Nucleus</keyword>
<keyword id="KW-1267">Proteomics identification</keyword>
<keyword id="KW-1185">Reference proteome</keyword>
<keyword id="KW-0804">Transcription</keyword>
<keyword id="KW-0805">Transcription regulation</keyword>
<evidence type="ECO:0000255" key="1">
    <source>
        <dbReference type="PROSITE-ProRule" id="PRU00108"/>
    </source>
</evidence>
<evidence type="ECO:0000256" key="2">
    <source>
        <dbReference type="SAM" id="MobiDB-lite"/>
    </source>
</evidence>
<evidence type="ECO:0000269" key="3">
    <source>
    </source>
</evidence>
<evidence type="ECO:0000305" key="4"/>
<accession>P31270</accession>
<accession>A4D190</accession>
<comment type="function">
    <text>Sequence-specific transcription factor which is part of a developmental regulatory system that provides cells with specific positional identities on the anterior-posterior axis.</text>
</comment>
<comment type="subcellular location">
    <subcellularLocation>
        <location>Nucleus</location>
    </subcellularLocation>
</comment>
<comment type="disease" evidence="3">
    <disease id="DI-02243">
        <name>Radioulnar synostosis with amegakaryocytic thrombocytopenia 1</name>
        <acronym>RUSAT1</acronym>
        <description>The syndrome consists of an unusual association of bone marrow failure and skeletal defects. Patients have the same skeletal defects, the proximal fusion of the radius and ulna, resulting in extremely limited pronation and supination of the forearm. Some patients have also symptomatic thrombocytopenia, with bruising and bleeding problems since birth, necessitating correction by bone marrow or umbilical-cord stem-cell transplantation.</description>
        <dbReference type="MIM" id="605432"/>
    </disease>
    <text>The disease is caused by variants affecting the gene represented in this entry.</text>
</comment>
<comment type="similarity">
    <text evidence="4">Belongs to the Abd-B homeobox family.</text>
</comment>
<comment type="online information" name="Atlas of Genetics and Cytogenetics in Oncology and Haematology">
    <link uri="https://atlasgeneticsoncology.org/gene/40847/HOXA11"/>
</comment>
<name>HXA11_HUMAN</name>
<reference key="1">
    <citation type="journal article" date="1998" name="Mamm. Genome">
        <title>Evolutionary conservation and tissue-specific processing of hoxa 11 antisense transcripts.</title>
        <authorList>
            <person name="Potter S.S."/>
            <person name="Branford W.W."/>
        </authorList>
    </citation>
    <scope>NUCLEOTIDE SEQUENCE [GENOMIC DNA]</scope>
</reference>
<reference key="2">
    <citation type="submission" date="1997-12" db="EMBL/GenBank/DDBJ databases">
        <authorList>
            <person name="Mi X."/>
            <person name="Winters J.L."/>
            <person name="Stevens D.B."/>
            <person name="Fleischman R.A."/>
        </authorList>
    </citation>
    <scope>NUCLEOTIDE SEQUENCE [GENOMIC DNA]</scope>
</reference>
<reference key="3">
    <citation type="journal article" date="2003" name="Science">
        <title>Human chromosome 7: DNA sequence and biology.</title>
        <authorList>
            <person name="Scherer S.W."/>
            <person name="Cheung J."/>
            <person name="MacDonald J.R."/>
            <person name="Osborne L.R."/>
            <person name="Nakabayashi K."/>
            <person name="Herbrick J.-A."/>
            <person name="Carson A.R."/>
            <person name="Parker-Katiraee L."/>
            <person name="Skaug J."/>
            <person name="Khaja R."/>
            <person name="Zhang J."/>
            <person name="Hudek A.K."/>
            <person name="Li M."/>
            <person name="Haddad M."/>
            <person name="Duggan G.E."/>
            <person name="Fernandez B.A."/>
            <person name="Kanematsu E."/>
            <person name="Gentles S."/>
            <person name="Christopoulos C.C."/>
            <person name="Choufani S."/>
            <person name="Kwasnicka D."/>
            <person name="Zheng X.H."/>
            <person name="Lai Z."/>
            <person name="Nusskern D.R."/>
            <person name="Zhang Q."/>
            <person name="Gu Z."/>
            <person name="Lu F."/>
            <person name="Zeesman S."/>
            <person name="Nowaczyk M.J."/>
            <person name="Teshima I."/>
            <person name="Chitayat D."/>
            <person name="Shuman C."/>
            <person name="Weksberg R."/>
            <person name="Zackai E.H."/>
            <person name="Grebe T.A."/>
            <person name="Cox S.R."/>
            <person name="Kirkpatrick S.J."/>
            <person name="Rahman N."/>
            <person name="Friedman J.M."/>
            <person name="Heng H.H.Q."/>
            <person name="Pelicci P.G."/>
            <person name="Lo-Coco F."/>
            <person name="Belloni E."/>
            <person name="Shaffer L.G."/>
            <person name="Pober B."/>
            <person name="Morton C.C."/>
            <person name="Gusella J.F."/>
            <person name="Bruns G.A.P."/>
            <person name="Korf B.R."/>
            <person name="Quade B.J."/>
            <person name="Ligon A.H."/>
            <person name="Ferguson H."/>
            <person name="Higgins A.W."/>
            <person name="Leach N.T."/>
            <person name="Herrick S.R."/>
            <person name="Lemyre E."/>
            <person name="Farra C.G."/>
            <person name="Kim H.-G."/>
            <person name="Summers A.M."/>
            <person name="Gripp K.W."/>
            <person name="Roberts W."/>
            <person name="Szatmari P."/>
            <person name="Winsor E.J.T."/>
            <person name="Grzeschik K.-H."/>
            <person name="Teebi A."/>
            <person name="Minassian B.A."/>
            <person name="Kere J."/>
            <person name="Armengol L."/>
            <person name="Pujana M.A."/>
            <person name="Estivill X."/>
            <person name="Wilson M.D."/>
            <person name="Koop B.F."/>
            <person name="Tosi S."/>
            <person name="Moore G.E."/>
            <person name="Boright A.P."/>
            <person name="Zlotorynski E."/>
            <person name="Kerem B."/>
            <person name="Kroisel P.M."/>
            <person name="Petek E."/>
            <person name="Oscier D.G."/>
            <person name="Mould S.J."/>
            <person name="Doehner H."/>
            <person name="Doehner K."/>
            <person name="Rommens J.M."/>
            <person name="Vincent J.B."/>
            <person name="Venter J.C."/>
            <person name="Li P.W."/>
            <person name="Mural R.J."/>
            <person name="Adams M.D."/>
            <person name="Tsui L.-C."/>
        </authorList>
    </citation>
    <scope>NUCLEOTIDE SEQUENCE [LARGE SCALE GENOMIC DNA]</scope>
</reference>
<reference key="4">
    <citation type="submission" date="2005-07" db="EMBL/GenBank/DDBJ databases">
        <authorList>
            <person name="Mural R.J."/>
            <person name="Istrail S."/>
            <person name="Sutton G.G."/>
            <person name="Florea L."/>
            <person name="Halpern A.L."/>
            <person name="Mobarry C.M."/>
            <person name="Lippert R."/>
            <person name="Walenz B."/>
            <person name="Shatkay H."/>
            <person name="Dew I."/>
            <person name="Miller J.R."/>
            <person name="Flanigan M.J."/>
            <person name="Edwards N.J."/>
            <person name="Bolanos R."/>
            <person name="Fasulo D."/>
            <person name="Halldorsson B.V."/>
            <person name="Hannenhalli S."/>
            <person name="Turner R."/>
            <person name="Yooseph S."/>
            <person name="Lu F."/>
            <person name="Nusskern D.R."/>
            <person name="Shue B.C."/>
            <person name="Zheng X.H."/>
            <person name="Zhong F."/>
            <person name="Delcher A.L."/>
            <person name="Huson D.H."/>
            <person name="Kravitz S.A."/>
            <person name="Mouchard L."/>
            <person name="Reinert K."/>
            <person name="Remington K.A."/>
            <person name="Clark A.G."/>
            <person name="Waterman M.S."/>
            <person name="Eichler E.E."/>
            <person name="Adams M.D."/>
            <person name="Hunkapiller M.W."/>
            <person name="Myers E.W."/>
            <person name="Venter J.C."/>
        </authorList>
    </citation>
    <scope>NUCLEOTIDE SEQUENCE [LARGE SCALE GENOMIC DNA]</scope>
</reference>
<reference key="5">
    <citation type="journal article" date="2003" name="Nature">
        <title>The DNA sequence of human chromosome 7.</title>
        <authorList>
            <person name="Hillier L.W."/>
            <person name="Fulton R.S."/>
            <person name="Fulton L.A."/>
            <person name="Graves T.A."/>
            <person name="Pepin K.H."/>
            <person name="Wagner-McPherson C."/>
            <person name="Layman D."/>
            <person name="Maas J."/>
            <person name="Jaeger S."/>
            <person name="Walker R."/>
            <person name="Wylie K."/>
            <person name="Sekhon M."/>
            <person name="Becker M.C."/>
            <person name="O'Laughlin M.D."/>
            <person name="Schaller M.E."/>
            <person name="Fewell G.A."/>
            <person name="Delehaunty K.D."/>
            <person name="Miner T.L."/>
            <person name="Nash W.E."/>
            <person name="Cordes M."/>
            <person name="Du H."/>
            <person name="Sun H."/>
            <person name="Edwards J."/>
            <person name="Bradshaw-Cordum H."/>
            <person name="Ali J."/>
            <person name="Andrews S."/>
            <person name="Isak A."/>
            <person name="Vanbrunt A."/>
            <person name="Nguyen C."/>
            <person name="Du F."/>
            <person name="Lamar B."/>
            <person name="Courtney L."/>
            <person name="Kalicki J."/>
            <person name="Ozersky P."/>
            <person name="Bielicki L."/>
            <person name="Scott K."/>
            <person name="Holmes A."/>
            <person name="Harkins R."/>
            <person name="Harris A."/>
            <person name="Strong C.M."/>
            <person name="Hou S."/>
            <person name="Tomlinson C."/>
            <person name="Dauphin-Kohlberg S."/>
            <person name="Kozlowicz-Reilly A."/>
            <person name="Leonard S."/>
            <person name="Rohlfing T."/>
            <person name="Rock S.M."/>
            <person name="Tin-Wollam A.-M."/>
            <person name="Abbott A."/>
            <person name="Minx P."/>
            <person name="Maupin R."/>
            <person name="Strowmatt C."/>
            <person name="Latreille P."/>
            <person name="Miller N."/>
            <person name="Johnson D."/>
            <person name="Murray J."/>
            <person name="Woessner J.P."/>
            <person name="Wendl M.C."/>
            <person name="Yang S.-P."/>
            <person name="Schultz B.R."/>
            <person name="Wallis J.W."/>
            <person name="Spieth J."/>
            <person name="Bieri T.A."/>
            <person name="Nelson J.O."/>
            <person name="Berkowicz N."/>
            <person name="Wohldmann P.E."/>
            <person name="Cook L.L."/>
            <person name="Hickenbotham M.T."/>
            <person name="Eldred J."/>
            <person name="Williams D."/>
            <person name="Bedell J.A."/>
            <person name="Mardis E.R."/>
            <person name="Clifton S.W."/>
            <person name="Chissoe S.L."/>
            <person name="Marra M.A."/>
            <person name="Raymond C."/>
            <person name="Haugen E."/>
            <person name="Gillett W."/>
            <person name="Zhou Y."/>
            <person name="James R."/>
            <person name="Phelps K."/>
            <person name="Iadanoto S."/>
            <person name="Bubb K."/>
            <person name="Simms E."/>
            <person name="Levy R."/>
            <person name="Clendenning J."/>
            <person name="Kaul R."/>
            <person name="Kent W.J."/>
            <person name="Furey T.S."/>
            <person name="Baertsch R.A."/>
            <person name="Brent M.R."/>
            <person name="Keibler E."/>
            <person name="Flicek P."/>
            <person name="Bork P."/>
            <person name="Suyama M."/>
            <person name="Bailey J.A."/>
            <person name="Portnoy M.E."/>
            <person name="Torrents D."/>
            <person name="Chinwalla A.T."/>
            <person name="Gish W.R."/>
            <person name="Eddy S.R."/>
            <person name="McPherson J.D."/>
            <person name="Olson M.V."/>
            <person name="Eichler E.E."/>
            <person name="Green E.D."/>
            <person name="Waterston R.H."/>
            <person name="Wilson R.K."/>
        </authorList>
    </citation>
    <scope>NUCLEOTIDE SEQUENCE [LARGE SCALE GENOMIC DNA]</scope>
</reference>
<reference key="6">
    <citation type="journal article" date="2004" name="Genome Res.">
        <title>The status, quality, and expansion of the NIH full-length cDNA project: the Mammalian Gene Collection (MGC).</title>
        <authorList>
            <consortium name="The MGC Project Team"/>
        </authorList>
    </citation>
    <scope>NUCLEOTIDE SEQUENCE [LARGE SCALE MRNA]</scope>
    <source>
        <tissue>Ovary</tissue>
    </source>
</reference>
<reference key="7">
    <citation type="journal article" date="1989" name="Nucleic Acids Res.">
        <title>The human HOX gene family.</title>
        <authorList>
            <person name="Acampora D."/>
            <person name="D'Esposito M."/>
            <person name="Faiella A."/>
            <person name="Pannese M."/>
            <person name="Migliaccio E."/>
            <person name="Morelli F."/>
            <person name="Stornaiuolo A."/>
            <person name="Nigro V."/>
            <person name="Simeone A."/>
            <person name="Boncinelli E."/>
        </authorList>
    </citation>
    <scope>NUCLEOTIDE SEQUENCE OF 241-306</scope>
</reference>
<reference key="8">
    <citation type="journal article" date="2000" name="Nat. Genet.">
        <title>Amegakaryocytic thrombocytopenia and radio-ulnar synostosis are associated with HOXA11 mutation.</title>
        <authorList>
            <person name="Thompson A.A."/>
            <person name="Nguyen L.T."/>
        </authorList>
    </citation>
    <scope>INVOLVEMENT IN RUSAT1</scope>
</reference>
<protein>
    <recommendedName>
        <fullName>Homeobox protein Hox-A11</fullName>
    </recommendedName>
    <alternativeName>
        <fullName>Homeobox protein Hox-1I</fullName>
    </alternativeName>
</protein>
<gene>
    <name type="primary">HOXA11</name>
    <name type="synonym">HOX1I</name>
</gene>
<proteinExistence type="evidence at protein level"/>
<dbReference type="EMBL" id="AF071164">
    <property type="protein sequence ID" value="AAC80455.1"/>
    <property type="molecule type" value="Genomic_DNA"/>
</dbReference>
<dbReference type="EMBL" id="AF039307">
    <property type="protein sequence ID" value="AAB94761.1"/>
    <property type="molecule type" value="Genomic_DNA"/>
</dbReference>
<dbReference type="EMBL" id="AC004080">
    <property type="status" value="NOT_ANNOTATED_CDS"/>
    <property type="molecule type" value="Genomic_DNA"/>
</dbReference>
<dbReference type="EMBL" id="CH236948">
    <property type="protein sequence ID" value="EAL24220.1"/>
    <property type="molecule type" value="Genomic_DNA"/>
</dbReference>
<dbReference type="EMBL" id="CH471073">
    <property type="protein sequence ID" value="EAW93888.1"/>
    <property type="molecule type" value="Genomic_DNA"/>
</dbReference>
<dbReference type="EMBL" id="BC040948">
    <property type="protein sequence ID" value="AAH40948.1"/>
    <property type="molecule type" value="mRNA"/>
</dbReference>
<dbReference type="CCDS" id="CCDS5411.1"/>
<dbReference type="PIR" id="S14931">
    <property type="entry name" value="S14931"/>
</dbReference>
<dbReference type="RefSeq" id="NP_005514.1">
    <property type="nucleotide sequence ID" value="NM_005523.6"/>
</dbReference>
<dbReference type="SMR" id="P31270"/>
<dbReference type="BioGRID" id="109447">
    <property type="interactions" value="12"/>
</dbReference>
<dbReference type="FunCoup" id="P31270">
    <property type="interactions" value="263"/>
</dbReference>
<dbReference type="IntAct" id="P31270">
    <property type="interactions" value="5"/>
</dbReference>
<dbReference type="STRING" id="9606.ENSP00000006015"/>
<dbReference type="GlyCosmos" id="P31270">
    <property type="glycosylation" value="1 site, 1 glycan"/>
</dbReference>
<dbReference type="GlyGen" id="P31270">
    <property type="glycosylation" value="4 sites, 1 O-linked glycan (4 sites)"/>
</dbReference>
<dbReference type="iPTMnet" id="P31270"/>
<dbReference type="PhosphoSitePlus" id="P31270"/>
<dbReference type="BioMuta" id="HOXA11"/>
<dbReference type="DMDM" id="13124744"/>
<dbReference type="jPOST" id="P31270"/>
<dbReference type="MassIVE" id="P31270"/>
<dbReference type="PaxDb" id="9606-ENSP00000006015"/>
<dbReference type="PeptideAtlas" id="P31270"/>
<dbReference type="ProteomicsDB" id="54771"/>
<dbReference type="Pumba" id="P31270"/>
<dbReference type="Antibodypedia" id="12408">
    <property type="antibodies" value="356 antibodies from 33 providers"/>
</dbReference>
<dbReference type="DNASU" id="3207"/>
<dbReference type="Ensembl" id="ENST00000006015.4">
    <property type="protein sequence ID" value="ENSP00000006015.3"/>
    <property type="gene ID" value="ENSG00000005073.6"/>
</dbReference>
<dbReference type="GeneID" id="3207"/>
<dbReference type="KEGG" id="hsa:3207"/>
<dbReference type="MANE-Select" id="ENST00000006015.4">
    <property type="protein sequence ID" value="ENSP00000006015.3"/>
    <property type="RefSeq nucleotide sequence ID" value="NM_005523.6"/>
    <property type="RefSeq protein sequence ID" value="NP_005514.1"/>
</dbReference>
<dbReference type="UCSC" id="uc003syx.4">
    <property type="organism name" value="human"/>
</dbReference>
<dbReference type="AGR" id="HGNC:5101"/>
<dbReference type="CTD" id="3207"/>
<dbReference type="DisGeNET" id="3207"/>
<dbReference type="GeneCards" id="HOXA11"/>
<dbReference type="HGNC" id="HGNC:5101">
    <property type="gene designation" value="HOXA11"/>
</dbReference>
<dbReference type="HPA" id="ENSG00000005073">
    <property type="expression patterns" value="Tissue enhanced (cervix, endometrium, smooth muscle)"/>
</dbReference>
<dbReference type="MalaCards" id="HOXA11"/>
<dbReference type="MIM" id="142958">
    <property type="type" value="gene"/>
</dbReference>
<dbReference type="MIM" id="605432">
    <property type="type" value="phenotype"/>
</dbReference>
<dbReference type="neXtProt" id="NX_P31270"/>
<dbReference type="OpenTargets" id="ENSG00000005073"/>
<dbReference type="Orphanet" id="71289">
    <property type="disease" value="Radio-ulnar synostosis-amegakaryocytic thrombocytopenia syndrome"/>
</dbReference>
<dbReference type="PharmGKB" id="PA29378"/>
<dbReference type="VEuPathDB" id="HostDB:ENSG00000005073"/>
<dbReference type="eggNOG" id="KOG0487">
    <property type="taxonomic scope" value="Eukaryota"/>
</dbReference>
<dbReference type="GeneTree" id="ENSGT00940000158311"/>
<dbReference type="HOGENOM" id="CLU_079662_0_0_1"/>
<dbReference type="InParanoid" id="P31270"/>
<dbReference type="OMA" id="HCYSADE"/>
<dbReference type="OrthoDB" id="6159439at2759"/>
<dbReference type="PAN-GO" id="P31270">
    <property type="GO annotations" value="5 GO annotations based on evolutionary models"/>
</dbReference>
<dbReference type="PhylomeDB" id="P31270"/>
<dbReference type="TreeFam" id="TF350668"/>
<dbReference type="PathwayCommons" id="P31270"/>
<dbReference type="Reactome" id="R-HSA-9830674">
    <property type="pathway name" value="Formation of the ureteric bud"/>
</dbReference>
<dbReference type="SignaLink" id="P31270"/>
<dbReference type="SIGNOR" id="P31270"/>
<dbReference type="BioGRID-ORCS" id="3207">
    <property type="hits" value="67 hits in 1173 CRISPR screens"/>
</dbReference>
<dbReference type="GeneWiki" id="HOXA11"/>
<dbReference type="GenomeRNAi" id="3207"/>
<dbReference type="Pharos" id="P31270">
    <property type="development level" value="Tbio"/>
</dbReference>
<dbReference type="PRO" id="PR:P31270"/>
<dbReference type="Proteomes" id="UP000005640">
    <property type="component" value="Chromosome 7"/>
</dbReference>
<dbReference type="RNAct" id="P31270">
    <property type="molecule type" value="protein"/>
</dbReference>
<dbReference type="Bgee" id="ENSG00000005073">
    <property type="expression patterns" value="Expressed in body of uterus and 72 other cell types or tissues"/>
</dbReference>
<dbReference type="ExpressionAtlas" id="P31270">
    <property type="expression patterns" value="baseline and differential"/>
</dbReference>
<dbReference type="GO" id="GO:0005654">
    <property type="term" value="C:nucleoplasm"/>
    <property type="evidence" value="ECO:0000314"/>
    <property type="project" value="HPA"/>
</dbReference>
<dbReference type="GO" id="GO:0005634">
    <property type="term" value="C:nucleus"/>
    <property type="evidence" value="ECO:0000318"/>
    <property type="project" value="GO_Central"/>
</dbReference>
<dbReference type="GO" id="GO:0032991">
    <property type="term" value="C:protein-containing complex"/>
    <property type="evidence" value="ECO:0000250"/>
    <property type="project" value="UniProtKB"/>
</dbReference>
<dbReference type="GO" id="GO:0032993">
    <property type="term" value="C:protein-DNA complex"/>
    <property type="evidence" value="ECO:0000250"/>
    <property type="project" value="UniProtKB"/>
</dbReference>
<dbReference type="GO" id="GO:0005667">
    <property type="term" value="C:transcription regulator complex"/>
    <property type="evidence" value="ECO:0000250"/>
    <property type="project" value="UniProtKB"/>
</dbReference>
<dbReference type="GO" id="GO:0000981">
    <property type="term" value="F:DNA-binding transcription factor activity, RNA polymerase II-specific"/>
    <property type="evidence" value="ECO:0000318"/>
    <property type="project" value="GO_Central"/>
</dbReference>
<dbReference type="GO" id="GO:0000978">
    <property type="term" value="F:RNA polymerase II cis-regulatory region sequence-specific DNA binding"/>
    <property type="evidence" value="ECO:0000318"/>
    <property type="project" value="GO_Central"/>
</dbReference>
<dbReference type="GO" id="GO:1990837">
    <property type="term" value="F:sequence-specific double-stranded DNA binding"/>
    <property type="evidence" value="ECO:0000314"/>
    <property type="project" value="ARUK-UCL"/>
</dbReference>
<dbReference type="GO" id="GO:0009653">
    <property type="term" value="P:anatomical structure morphogenesis"/>
    <property type="evidence" value="ECO:0000304"/>
    <property type="project" value="ProtInc"/>
</dbReference>
<dbReference type="GO" id="GO:0009952">
    <property type="term" value="P:anterior/posterior pattern specification"/>
    <property type="evidence" value="ECO:0007669"/>
    <property type="project" value="Ensembl"/>
</dbReference>
<dbReference type="GO" id="GO:0001658">
    <property type="term" value="P:branching involved in ureteric bud morphogenesis"/>
    <property type="evidence" value="ECO:0000250"/>
    <property type="project" value="UniProtKB"/>
</dbReference>
<dbReference type="GO" id="GO:0060351">
    <property type="term" value="P:cartilage development involved in endochondral bone morphogenesis"/>
    <property type="evidence" value="ECO:0000250"/>
    <property type="project" value="UniProtKB"/>
</dbReference>
<dbReference type="GO" id="GO:0002063">
    <property type="term" value="P:chondrocyte development"/>
    <property type="evidence" value="ECO:0007669"/>
    <property type="project" value="Ensembl"/>
</dbReference>
<dbReference type="GO" id="GO:0048589">
    <property type="term" value="P:developmental growth"/>
    <property type="evidence" value="ECO:0000250"/>
    <property type="project" value="UniProtKB"/>
</dbReference>
<dbReference type="GO" id="GO:0009953">
    <property type="term" value="P:dorsal/ventral pattern formation"/>
    <property type="evidence" value="ECO:0000250"/>
    <property type="project" value="UniProtKB"/>
</dbReference>
<dbReference type="GO" id="GO:0042733">
    <property type="term" value="P:embryonic digit morphogenesis"/>
    <property type="evidence" value="ECO:0007669"/>
    <property type="project" value="Ensembl"/>
</dbReference>
<dbReference type="GO" id="GO:0035115">
    <property type="term" value="P:embryonic forelimb morphogenesis"/>
    <property type="evidence" value="ECO:0007669"/>
    <property type="project" value="Ensembl"/>
</dbReference>
<dbReference type="GO" id="GO:0030326">
    <property type="term" value="P:embryonic limb morphogenesis"/>
    <property type="evidence" value="ECO:0000250"/>
    <property type="project" value="UniProtKB"/>
</dbReference>
<dbReference type="GO" id="GO:0060272">
    <property type="term" value="P:embryonic skeletal joint morphogenesis"/>
    <property type="evidence" value="ECO:0000318"/>
    <property type="project" value="GO_Central"/>
</dbReference>
<dbReference type="GO" id="GO:0008584">
    <property type="term" value="P:male gonad development"/>
    <property type="evidence" value="ECO:0007669"/>
    <property type="project" value="Ensembl"/>
</dbReference>
<dbReference type="GO" id="GO:0007501">
    <property type="term" value="P:mesodermal cell fate specification"/>
    <property type="evidence" value="ECO:0000250"/>
    <property type="project" value="UniProtKB"/>
</dbReference>
<dbReference type="GO" id="GO:0001656">
    <property type="term" value="P:metanephros development"/>
    <property type="evidence" value="ECO:0007669"/>
    <property type="project" value="Ensembl"/>
</dbReference>
<dbReference type="GO" id="GO:0001759">
    <property type="term" value="P:organ induction"/>
    <property type="evidence" value="ECO:0007669"/>
    <property type="project" value="Ensembl"/>
</dbReference>
<dbReference type="GO" id="GO:0010720">
    <property type="term" value="P:positive regulation of cell development"/>
    <property type="evidence" value="ECO:0000250"/>
    <property type="project" value="UniProtKB"/>
</dbReference>
<dbReference type="GO" id="GO:1902761">
    <property type="term" value="P:positive regulation of chondrocyte development"/>
    <property type="evidence" value="ECO:0007669"/>
    <property type="project" value="Ensembl"/>
</dbReference>
<dbReference type="GO" id="GO:0032332">
    <property type="term" value="P:positive regulation of chondrocyte differentiation"/>
    <property type="evidence" value="ECO:0000250"/>
    <property type="project" value="UniProtKB"/>
</dbReference>
<dbReference type="GO" id="GO:0045893">
    <property type="term" value="P:positive regulation of DNA-templated transcription"/>
    <property type="evidence" value="ECO:0000250"/>
    <property type="project" value="UniProtKB"/>
</dbReference>
<dbReference type="GO" id="GO:0030850">
    <property type="term" value="P:prostate gland development"/>
    <property type="evidence" value="ECO:0007669"/>
    <property type="project" value="Ensembl"/>
</dbReference>
<dbReference type="GO" id="GO:0009954">
    <property type="term" value="P:proximal/distal pattern formation"/>
    <property type="evidence" value="ECO:0007669"/>
    <property type="project" value="Ensembl"/>
</dbReference>
<dbReference type="GO" id="GO:0006357">
    <property type="term" value="P:regulation of transcription by RNA polymerase II"/>
    <property type="evidence" value="ECO:0000318"/>
    <property type="project" value="GO_Central"/>
</dbReference>
<dbReference type="GO" id="GO:0043627">
    <property type="term" value="P:response to estrogen"/>
    <property type="evidence" value="ECO:0007669"/>
    <property type="project" value="Ensembl"/>
</dbReference>
<dbReference type="GO" id="GO:0033574">
    <property type="term" value="P:response to testosterone"/>
    <property type="evidence" value="ECO:0007669"/>
    <property type="project" value="Ensembl"/>
</dbReference>
<dbReference type="GO" id="GO:0007338">
    <property type="term" value="P:single fertilization"/>
    <property type="evidence" value="ECO:0007669"/>
    <property type="project" value="Ensembl"/>
</dbReference>
<dbReference type="GO" id="GO:0001501">
    <property type="term" value="P:skeletal system development"/>
    <property type="evidence" value="ECO:0000250"/>
    <property type="project" value="UniProtKB"/>
</dbReference>
<dbReference type="GO" id="GO:0007283">
    <property type="term" value="P:spermatogenesis"/>
    <property type="evidence" value="ECO:0007669"/>
    <property type="project" value="Ensembl"/>
</dbReference>
<dbReference type="GO" id="GO:0060065">
    <property type="term" value="P:uterus development"/>
    <property type="evidence" value="ECO:0007669"/>
    <property type="project" value="Ensembl"/>
</dbReference>
<dbReference type="CDD" id="cd00086">
    <property type="entry name" value="homeodomain"/>
    <property type="match status" value="1"/>
</dbReference>
<dbReference type="FunFam" id="1.10.10.60:FF:000166">
    <property type="entry name" value="homeobox protein Hox-C11"/>
    <property type="match status" value="1"/>
</dbReference>
<dbReference type="Gene3D" id="1.10.10.60">
    <property type="entry name" value="Homeodomain-like"/>
    <property type="match status" value="1"/>
</dbReference>
<dbReference type="InterPro" id="IPR021918">
    <property type="entry name" value="DUF3528"/>
</dbReference>
<dbReference type="InterPro" id="IPR001356">
    <property type="entry name" value="HD"/>
</dbReference>
<dbReference type="InterPro" id="IPR020479">
    <property type="entry name" value="HD_metazoa"/>
</dbReference>
<dbReference type="InterPro" id="IPR017970">
    <property type="entry name" value="Homeobox_CS"/>
</dbReference>
<dbReference type="InterPro" id="IPR009057">
    <property type="entry name" value="Homeodomain-like_sf"/>
</dbReference>
<dbReference type="PANTHER" id="PTHR46092:SF3">
    <property type="entry name" value="HOMEOBOX PROTEIN HOX-A11"/>
    <property type="match status" value="1"/>
</dbReference>
<dbReference type="PANTHER" id="PTHR46092">
    <property type="entry name" value="HOMEOBOX PROTEIN HOX-A11-RELATED"/>
    <property type="match status" value="1"/>
</dbReference>
<dbReference type="Pfam" id="PF12045">
    <property type="entry name" value="DUF3528"/>
    <property type="match status" value="1"/>
</dbReference>
<dbReference type="Pfam" id="PF00046">
    <property type="entry name" value="Homeodomain"/>
    <property type="match status" value="1"/>
</dbReference>
<dbReference type="PRINTS" id="PR00024">
    <property type="entry name" value="HOMEOBOX"/>
</dbReference>
<dbReference type="SMART" id="SM00389">
    <property type="entry name" value="HOX"/>
    <property type="match status" value="1"/>
</dbReference>
<dbReference type="SUPFAM" id="SSF46689">
    <property type="entry name" value="Homeodomain-like"/>
    <property type="match status" value="1"/>
</dbReference>
<dbReference type="PROSITE" id="PS00027">
    <property type="entry name" value="HOMEOBOX_1"/>
    <property type="match status" value="1"/>
</dbReference>
<dbReference type="PROSITE" id="PS50071">
    <property type="entry name" value="HOMEOBOX_2"/>
    <property type="match status" value="1"/>
</dbReference>
<organism>
    <name type="scientific">Homo sapiens</name>
    <name type="common">Human</name>
    <dbReference type="NCBI Taxonomy" id="9606"/>
    <lineage>
        <taxon>Eukaryota</taxon>
        <taxon>Metazoa</taxon>
        <taxon>Chordata</taxon>
        <taxon>Craniata</taxon>
        <taxon>Vertebrata</taxon>
        <taxon>Euteleostomi</taxon>
        <taxon>Mammalia</taxon>
        <taxon>Eutheria</taxon>
        <taxon>Euarchontoglires</taxon>
        <taxon>Primates</taxon>
        <taxon>Haplorrhini</taxon>
        <taxon>Catarrhini</taxon>
        <taxon>Hominidae</taxon>
        <taxon>Homo</taxon>
    </lineage>
</organism>
<feature type="chain" id="PRO_0000200095" description="Homeobox protein Hox-A11">
    <location>
        <begin position="1"/>
        <end position="313"/>
    </location>
</feature>
<feature type="DNA-binding region" description="Homeobox" evidence="1">
    <location>
        <begin position="241"/>
        <end position="300"/>
    </location>
</feature>
<feature type="region of interest" description="Disordered" evidence="2">
    <location>
        <begin position="154"/>
        <end position="246"/>
    </location>
</feature>
<feature type="compositionally biased region" description="Low complexity" evidence="2">
    <location>
        <begin position="168"/>
        <end position="193"/>
    </location>
</feature>
<feature type="compositionally biased region" description="Basic and acidic residues" evidence="2">
    <location>
        <begin position="207"/>
        <end position="217"/>
    </location>
</feature>